<name>RS9_EDWI9</name>
<organism>
    <name type="scientific">Edwardsiella ictaluri (strain 93-146)</name>
    <dbReference type="NCBI Taxonomy" id="634503"/>
    <lineage>
        <taxon>Bacteria</taxon>
        <taxon>Pseudomonadati</taxon>
        <taxon>Pseudomonadota</taxon>
        <taxon>Gammaproteobacteria</taxon>
        <taxon>Enterobacterales</taxon>
        <taxon>Hafniaceae</taxon>
        <taxon>Edwardsiella</taxon>
    </lineage>
</organism>
<keyword id="KW-0687">Ribonucleoprotein</keyword>
<keyword id="KW-0689">Ribosomal protein</keyword>
<gene>
    <name evidence="1" type="primary">rpsI</name>
    <name type="ordered locus">NT01EI_0593</name>
</gene>
<evidence type="ECO:0000255" key="1">
    <source>
        <dbReference type="HAMAP-Rule" id="MF_00532"/>
    </source>
</evidence>
<evidence type="ECO:0000305" key="2"/>
<comment type="similarity">
    <text evidence="1">Belongs to the universal ribosomal protein uS9 family.</text>
</comment>
<protein>
    <recommendedName>
        <fullName evidence="1">Small ribosomal subunit protein uS9</fullName>
    </recommendedName>
    <alternativeName>
        <fullName evidence="2">30S ribosomal protein S9</fullName>
    </alternativeName>
</protein>
<accession>C5B748</accession>
<reference key="1">
    <citation type="submission" date="2009-03" db="EMBL/GenBank/DDBJ databases">
        <title>Complete genome sequence of Edwardsiella ictaluri 93-146.</title>
        <authorList>
            <person name="Williams M.L."/>
            <person name="Gillaspy A.F."/>
            <person name="Dyer D.W."/>
            <person name="Thune R.L."/>
            <person name="Waldbieser G.C."/>
            <person name="Schuster S.C."/>
            <person name="Gipson J."/>
            <person name="Zaitshik J."/>
            <person name="Landry C."/>
            <person name="Lawrence M.L."/>
        </authorList>
    </citation>
    <scope>NUCLEOTIDE SEQUENCE [LARGE SCALE GENOMIC DNA]</scope>
    <source>
        <strain>93-146</strain>
    </source>
</reference>
<dbReference type="EMBL" id="CP001600">
    <property type="protein sequence ID" value="ACR67822.1"/>
    <property type="molecule type" value="Genomic_DNA"/>
</dbReference>
<dbReference type="RefSeq" id="WP_005281735.1">
    <property type="nucleotide sequence ID" value="NZ_CP169062.1"/>
</dbReference>
<dbReference type="SMR" id="C5B748"/>
<dbReference type="STRING" id="67780.B6E78_13670"/>
<dbReference type="GeneID" id="93122967"/>
<dbReference type="KEGG" id="eic:NT01EI_0593"/>
<dbReference type="HOGENOM" id="CLU_046483_2_1_6"/>
<dbReference type="OrthoDB" id="9803965at2"/>
<dbReference type="Proteomes" id="UP000001485">
    <property type="component" value="Chromosome"/>
</dbReference>
<dbReference type="GO" id="GO:0022627">
    <property type="term" value="C:cytosolic small ribosomal subunit"/>
    <property type="evidence" value="ECO:0007669"/>
    <property type="project" value="TreeGrafter"/>
</dbReference>
<dbReference type="GO" id="GO:0003723">
    <property type="term" value="F:RNA binding"/>
    <property type="evidence" value="ECO:0007669"/>
    <property type="project" value="TreeGrafter"/>
</dbReference>
<dbReference type="GO" id="GO:0003735">
    <property type="term" value="F:structural constituent of ribosome"/>
    <property type="evidence" value="ECO:0007669"/>
    <property type="project" value="InterPro"/>
</dbReference>
<dbReference type="GO" id="GO:0006412">
    <property type="term" value="P:translation"/>
    <property type="evidence" value="ECO:0007669"/>
    <property type="project" value="UniProtKB-UniRule"/>
</dbReference>
<dbReference type="FunFam" id="3.30.230.10:FF:000001">
    <property type="entry name" value="30S ribosomal protein S9"/>
    <property type="match status" value="1"/>
</dbReference>
<dbReference type="Gene3D" id="3.30.230.10">
    <property type="match status" value="1"/>
</dbReference>
<dbReference type="HAMAP" id="MF_00532_B">
    <property type="entry name" value="Ribosomal_uS9_B"/>
    <property type="match status" value="1"/>
</dbReference>
<dbReference type="InterPro" id="IPR020568">
    <property type="entry name" value="Ribosomal_Su5_D2-typ_SF"/>
</dbReference>
<dbReference type="InterPro" id="IPR000754">
    <property type="entry name" value="Ribosomal_uS9"/>
</dbReference>
<dbReference type="InterPro" id="IPR023035">
    <property type="entry name" value="Ribosomal_uS9_bac/plastid"/>
</dbReference>
<dbReference type="InterPro" id="IPR020574">
    <property type="entry name" value="Ribosomal_uS9_CS"/>
</dbReference>
<dbReference type="InterPro" id="IPR014721">
    <property type="entry name" value="Ribsml_uS5_D2-typ_fold_subgr"/>
</dbReference>
<dbReference type="NCBIfam" id="NF001099">
    <property type="entry name" value="PRK00132.1"/>
    <property type="match status" value="1"/>
</dbReference>
<dbReference type="PANTHER" id="PTHR21569">
    <property type="entry name" value="RIBOSOMAL PROTEIN S9"/>
    <property type="match status" value="1"/>
</dbReference>
<dbReference type="PANTHER" id="PTHR21569:SF1">
    <property type="entry name" value="SMALL RIBOSOMAL SUBUNIT PROTEIN US9M"/>
    <property type="match status" value="1"/>
</dbReference>
<dbReference type="Pfam" id="PF00380">
    <property type="entry name" value="Ribosomal_S9"/>
    <property type="match status" value="1"/>
</dbReference>
<dbReference type="SUPFAM" id="SSF54211">
    <property type="entry name" value="Ribosomal protein S5 domain 2-like"/>
    <property type="match status" value="1"/>
</dbReference>
<dbReference type="PROSITE" id="PS00360">
    <property type="entry name" value="RIBOSOMAL_S9"/>
    <property type="match status" value="1"/>
</dbReference>
<feature type="chain" id="PRO_1000211832" description="Small ribosomal subunit protein uS9">
    <location>
        <begin position="1"/>
        <end position="130"/>
    </location>
</feature>
<sequence length="130" mass="14843">MAENQYYGTGRRKSSAARVFIKPGSGKIVINQRSLEQYFGRETARMVVRQPLELVDMVEKLDLYITVKGGGISGQAGAIRHGITRALMEYDETLRSELRKAGFVTRDARQVERKKVGLRKARRRPQFSKR</sequence>
<proteinExistence type="inferred from homology"/>